<proteinExistence type="evidence at protein level"/>
<keyword id="KW-0027">Amidation</keyword>
<keyword id="KW-0878">Amphibian defense peptide</keyword>
<keyword id="KW-0044">Antibiotic</keyword>
<keyword id="KW-0929">Antimicrobial</keyword>
<keyword id="KW-0165">Cleavage on pair of basic residues</keyword>
<keyword id="KW-0295">Fungicide</keyword>
<keyword id="KW-0391">Immunity</keyword>
<keyword id="KW-0399">Innate immunity</keyword>
<keyword id="KW-0472">Membrane</keyword>
<keyword id="KW-0964">Secreted</keyword>
<keyword id="KW-0732">Signal</keyword>
<keyword id="KW-1052">Target cell membrane</keyword>
<keyword id="KW-1053">Target membrane</keyword>
<evidence type="ECO:0000250" key="1">
    <source>
        <dbReference type="UniProtKB" id="B3KYH4"/>
    </source>
</evidence>
<evidence type="ECO:0000255" key="2"/>
<evidence type="ECO:0000269" key="3">
    <source ref="1"/>
</evidence>
<evidence type="ECO:0000303" key="4">
    <source ref="1"/>
</evidence>
<evidence type="ECO:0000305" key="5"/>
<evidence type="ECO:0000305" key="6">
    <source ref="1"/>
</evidence>
<evidence type="ECO:0000312" key="7">
    <source>
        <dbReference type="EMBL" id="ACQ65676.1"/>
    </source>
</evidence>
<name>TPA_AQUCT</name>
<feature type="signal peptide" evidence="2">
    <location>
        <begin position="1"/>
        <end position="22"/>
    </location>
</feature>
<feature type="propeptide" id="PRO_0000457128" evidence="6">
    <location>
        <begin position="23"/>
        <end position="47"/>
    </location>
</feature>
<feature type="peptide" id="PRO_5002940457" description="Temporin-La">
    <location>
        <begin position="48"/>
        <end position="60"/>
    </location>
</feature>
<feature type="modified residue" description="Leucine amide" evidence="6">
    <location>
        <position position="60"/>
    </location>
</feature>
<dbReference type="EMBL" id="FJ430082">
    <property type="protein sequence ID" value="ACQ65676.1"/>
    <property type="molecule type" value="mRNA"/>
</dbReference>
<dbReference type="GO" id="GO:0005576">
    <property type="term" value="C:extracellular region"/>
    <property type="evidence" value="ECO:0007669"/>
    <property type="project" value="UniProtKB-SubCell"/>
</dbReference>
<dbReference type="GO" id="GO:0016020">
    <property type="term" value="C:membrane"/>
    <property type="evidence" value="ECO:0007669"/>
    <property type="project" value="UniProtKB-KW"/>
</dbReference>
<dbReference type="GO" id="GO:0044218">
    <property type="term" value="C:other organism cell membrane"/>
    <property type="evidence" value="ECO:0007669"/>
    <property type="project" value="UniProtKB-KW"/>
</dbReference>
<dbReference type="GO" id="GO:0042742">
    <property type="term" value="P:defense response to bacterium"/>
    <property type="evidence" value="ECO:0007669"/>
    <property type="project" value="UniProtKB-KW"/>
</dbReference>
<dbReference type="GO" id="GO:0050832">
    <property type="term" value="P:defense response to fungus"/>
    <property type="evidence" value="ECO:0007669"/>
    <property type="project" value="UniProtKB-KW"/>
</dbReference>
<dbReference type="GO" id="GO:0045087">
    <property type="term" value="P:innate immune response"/>
    <property type="evidence" value="ECO:0007669"/>
    <property type="project" value="UniProtKB-KW"/>
</dbReference>
<dbReference type="GO" id="GO:0031640">
    <property type="term" value="P:killing of cells of another organism"/>
    <property type="evidence" value="ECO:0007669"/>
    <property type="project" value="UniProtKB-KW"/>
</dbReference>
<dbReference type="InterPro" id="IPR004275">
    <property type="entry name" value="Frog_antimicrobial_propeptide"/>
</dbReference>
<dbReference type="Pfam" id="PF03032">
    <property type="entry name" value="FSAP_sig_propep"/>
    <property type="match status" value="1"/>
</dbReference>
<organism>
    <name type="scientific">Aquarana catesbeiana</name>
    <name type="common">American bullfrog</name>
    <name type="synonym">Rana catesbeiana</name>
    <dbReference type="NCBI Taxonomy" id="8400"/>
    <lineage>
        <taxon>Eukaryota</taxon>
        <taxon>Metazoa</taxon>
        <taxon>Chordata</taxon>
        <taxon>Craniata</taxon>
        <taxon>Vertebrata</taxon>
        <taxon>Euteleostomi</taxon>
        <taxon>Amphibia</taxon>
        <taxon>Batrachia</taxon>
        <taxon>Anura</taxon>
        <taxon>Neobatrachia</taxon>
        <taxon>Ranoidea</taxon>
        <taxon>Ranidae</taxon>
        <taxon>Aquarana</taxon>
    </lineage>
</organism>
<reference evidence="7" key="1">
    <citation type="book" date="2011" name="(In) Molecular cloning - selected applications in medicine and biology">
        <title>Effects of two novel peptides from skin of Lithobates catesbeianus on tumor cell morphology and proliferation.</title>
        <editorList>
            <person name="Brown G."/>
        </editorList>
        <authorList>
            <person name="Zhao R.-L."/>
            <person name="Han J.-Y."/>
            <person name="Han W.-Y."/>
            <person name="He H.-X."/>
            <person name="Ma J.-F."/>
        </authorList>
    </citation>
    <scope>NUCLEOTIDE SEQUENCE [MRNA]</scope>
    <scope>FUNCTION</scope>
    <scope>SYNTHESIS OF 41-71</scope>
    <scope>PROBABLE AMIDATION AT LEU-60</scope>
    <source>
        <tissue>Skin</tissue>
    </source>
</reference>
<accession>C4N9P6</accession>
<comment type="function">
    <text evidence="3">Antimicrobial peptide with amphipathic alpha-helical structure that acts against both Gram-positive and Gram-negative bacteria and the fungus Candida albicans. Is active against S.aureus ATCC 25923 (MIC=2.5 ug/ml), S.suis 2 CVCC 606 (MIC=15.6 ug/ml), Salmonella ATCC 20020 (MIC=15.6 ug/ml), P.aeruginosa ATCC 227853 (MIC=60 ug/ml), and C.albicans ATCC10231 (MIC=31.25 ug/ml). Is not active against B.subtilis ADB403, E.coli ATCC 25922, and K.pneumoniae ATCC 700603. Also shows a strong antitumor activity, but no hemolytic activity.</text>
</comment>
<comment type="subcellular location">
    <subcellularLocation>
        <location evidence="6">Secreted</location>
    </subcellularLocation>
    <subcellularLocation>
        <location evidence="6">Target cell membrane</location>
    </subcellularLocation>
    <text evidence="1">May insert into the lipid bilayer with an in-plane (parallel) orientation.</text>
</comment>
<comment type="tissue specificity">
    <text evidence="1">Expressed by the skin glands.</text>
</comment>
<comment type="similarity">
    <text evidence="5">Belongs to the frog skin active peptide (FSAP) family. Temporin subfamily.</text>
</comment>
<protein>
    <recommendedName>
        <fullName evidence="4">Temporin-La</fullName>
    </recommendedName>
    <alternativeName>
        <fullName evidence="7">Catesbeianin-1 protein</fullName>
    </alternativeName>
</protein>
<sequence>MFPLKKSLLLLFFLGTINLSFCEEERDVDQDERRDDPGERNVQVEKRLLRHVVKILEKYLGK</sequence>